<name>DMA_ECOLI</name>
<organism>
    <name type="scientific">Escherichia coli (strain K12)</name>
    <dbReference type="NCBI Taxonomy" id="83333"/>
    <lineage>
        <taxon>Bacteria</taxon>
        <taxon>Pseudomonadati</taxon>
        <taxon>Pseudomonadota</taxon>
        <taxon>Gammaproteobacteria</taxon>
        <taxon>Enterobacterales</taxon>
        <taxon>Enterobacteriaceae</taxon>
        <taxon>Escherichia</taxon>
    </lineage>
</organism>
<dbReference type="EC" id="2.1.1.72"/>
<dbReference type="EMBL" id="J01600">
    <property type="protein sequence ID" value="AAA23664.1"/>
    <property type="molecule type" value="Genomic_DNA"/>
</dbReference>
<dbReference type="EMBL" id="V00272">
    <property type="protein sequence ID" value="CAA23530.1"/>
    <property type="molecule type" value="Genomic_DNA"/>
</dbReference>
<dbReference type="EMBL" id="Z19601">
    <property type="protein sequence ID" value="CAA79668.1"/>
    <property type="molecule type" value="Genomic_DNA"/>
</dbReference>
<dbReference type="EMBL" id="U18997">
    <property type="protein sequence ID" value="AAA58184.1"/>
    <property type="molecule type" value="Genomic_DNA"/>
</dbReference>
<dbReference type="EMBL" id="U00096">
    <property type="protein sequence ID" value="AAC76412.1"/>
    <property type="molecule type" value="Genomic_DNA"/>
</dbReference>
<dbReference type="EMBL" id="AP009048">
    <property type="protein sequence ID" value="BAE77904.1"/>
    <property type="molecule type" value="Genomic_DNA"/>
</dbReference>
<dbReference type="EMBL" id="X15162">
    <property type="protein sequence ID" value="CAA33254.1"/>
    <property type="molecule type" value="Genomic_DNA"/>
</dbReference>
<dbReference type="PIR" id="A00555">
    <property type="entry name" value="XYECDA"/>
</dbReference>
<dbReference type="RefSeq" id="NP_417846.1">
    <property type="nucleotide sequence ID" value="NC_000913.3"/>
</dbReference>
<dbReference type="RefSeq" id="WP_000742143.1">
    <property type="nucleotide sequence ID" value="NZ_STEB01000004.1"/>
</dbReference>
<dbReference type="PDB" id="2G1P">
    <property type="method" value="X-ray"/>
    <property type="resolution" value="1.89 A"/>
    <property type="chains" value="A/B=1-278"/>
</dbReference>
<dbReference type="PDB" id="2ORE">
    <property type="method" value="X-ray"/>
    <property type="resolution" value="2.99 A"/>
    <property type="chains" value="D/E/F=1-278"/>
</dbReference>
<dbReference type="PDB" id="4GBE">
    <property type="method" value="X-ray"/>
    <property type="resolution" value="2.66 A"/>
    <property type="chains" value="D/E/F=1-278"/>
</dbReference>
<dbReference type="PDB" id="4GOL">
    <property type="method" value="X-ray"/>
    <property type="resolution" value="2.57 A"/>
    <property type="chains" value="D/E/F=1-278"/>
</dbReference>
<dbReference type="PDB" id="4GOM">
    <property type="method" value="X-ray"/>
    <property type="resolution" value="2.45 A"/>
    <property type="chains" value="D/E/F=1-278"/>
</dbReference>
<dbReference type="PDB" id="4GON">
    <property type="method" value="X-ray"/>
    <property type="resolution" value="2.72 A"/>
    <property type="chains" value="D/E/F=1-278"/>
</dbReference>
<dbReference type="PDB" id="4GOO">
    <property type="method" value="X-ray"/>
    <property type="resolution" value="2.70 A"/>
    <property type="chains" value="D/E/F=1-278"/>
</dbReference>
<dbReference type="PDB" id="4RTJ">
    <property type="method" value="X-ray"/>
    <property type="resolution" value="1.99 A"/>
    <property type="chains" value="A=1-278"/>
</dbReference>
<dbReference type="PDB" id="4RTK">
    <property type="method" value="X-ray"/>
    <property type="resolution" value="1.96 A"/>
    <property type="chains" value="A=1-278"/>
</dbReference>
<dbReference type="PDB" id="4RTL">
    <property type="method" value="X-ray"/>
    <property type="resolution" value="2.19 A"/>
    <property type="chains" value="A=1-278"/>
</dbReference>
<dbReference type="PDB" id="4RTM">
    <property type="method" value="X-ray"/>
    <property type="resolution" value="2.50 A"/>
    <property type="chains" value="A=1-278"/>
</dbReference>
<dbReference type="PDB" id="4RTN">
    <property type="method" value="X-ray"/>
    <property type="resolution" value="2.59 A"/>
    <property type="chains" value="A=1-278"/>
</dbReference>
<dbReference type="PDB" id="4RTO">
    <property type="method" value="X-ray"/>
    <property type="resolution" value="2.69 A"/>
    <property type="chains" value="A=1-278"/>
</dbReference>
<dbReference type="PDB" id="4RTP">
    <property type="method" value="X-ray"/>
    <property type="resolution" value="2.39 A"/>
    <property type="chains" value="A=1-278"/>
</dbReference>
<dbReference type="PDB" id="4RTQ">
    <property type="method" value="X-ray"/>
    <property type="resolution" value="2.00 A"/>
    <property type="chains" value="A=1-278"/>
</dbReference>
<dbReference type="PDB" id="4RTR">
    <property type="method" value="X-ray"/>
    <property type="resolution" value="2.39 A"/>
    <property type="chains" value="A=1-278"/>
</dbReference>
<dbReference type="PDB" id="4RTS">
    <property type="method" value="X-ray"/>
    <property type="resolution" value="2.49 A"/>
    <property type="chains" value="A=1-278"/>
</dbReference>
<dbReference type="PDBsum" id="2G1P"/>
<dbReference type="PDBsum" id="2ORE"/>
<dbReference type="PDBsum" id="4GBE"/>
<dbReference type="PDBsum" id="4GOL"/>
<dbReference type="PDBsum" id="4GOM"/>
<dbReference type="PDBsum" id="4GON"/>
<dbReference type="PDBsum" id="4GOO"/>
<dbReference type="PDBsum" id="4RTJ"/>
<dbReference type="PDBsum" id="4RTK"/>
<dbReference type="PDBsum" id="4RTL"/>
<dbReference type="PDBsum" id="4RTM"/>
<dbReference type="PDBsum" id="4RTN"/>
<dbReference type="PDBsum" id="4RTO"/>
<dbReference type="PDBsum" id="4RTP"/>
<dbReference type="PDBsum" id="4RTQ"/>
<dbReference type="PDBsum" id="4RTR"/>
<dbReference type="PDBsum" id="4RTS"/>
<dbReference type="SMR" id="P0AEE8"/>
<dbReference type="BioGRID" id="4261860">
    <property type="interactions" value="141"/>
</dbReference>
<dbReference type="DIP" id="DIP-47948N"/>
<dbReference type="FunCoup" id="P0AEE8">
    <property type="interactions" value="60"/>
</dbReference>
<dbReference type="IntAct" id="P0AEE8">
    <property type="interactions" value="24"/>
</dbReference>
<dbReference type="STRING" id="511145.b3387"/>
<dbReference type="BindingDB" id="P0AEE8"/>
<dbReference type="ChEMBL" id="CHEMBL1075075"/>
<dbReference type="REBASE" id="13376">
    <property type="entry name" value="M.EcoW3110DamP"/>
</dbReference>
<dbReference type="REBASE" id="2396">
    <property type="entry name" value="M.EcoKDam"/>
</dbReference>
<dbReference type="REBASE" id="441639">
    <property type="entry name" value="M.EcoBL21FDamP"/>
</dbReference>
<dbReference type="jPOST" id="P0AEE8"/>
<dbReference type="PaxDb" id="511145-b3387"/>
<dbReference type="EnsemblBacteria" id="AAC76412">
    <property type="protein sequence ID" value="AAC76412"/>
    <property type="gene ID" value="b3387"/>
</dbReference>
<dbReference type="GeneID" id="75206325"/>
<dbReference type="GeneID" id="947893"/>
<dbReference type="KEGG" id="ecj:JW3350"/>
<dbReference type="KEGG" id="eco:b3387"/>
<dbReference type="KEGG" id="ecoc:C3026_18380"/>
<dbReference type="PATRIC" id="fig|1411691.4.peg.3343"/>
<dbReference type="EchoBASE" id="EB0200"/>
<dbReference type="eggNOG" id="COG0338">
    <property type="taxonomic scope" value="Bacteria"/>
</dbReference>
<dbReference type="HOGENOM" id="CLU_063430_0_1_6"/>
<dbReference type="InParanoid" id="P0AEE8"/>
<dbReference type="OMA" id="YMNRHGF"/>
<dbReference type="OrthoDB" id="9805629at2"/>
<dbReference type="PhylomeDB" id="P0AEE8"/>
<dbReference type="BioCyc" id="EcoCyc:EG10204-MONOMER"/>
<dbReference type="BioCyc" id="MetaCyc:EG10204-MONOMER"/>
<dbReference type="BRENDA" id="2.1.1.72">
    <property type="organism ID" value="2026"/>
</dbReference>
<dbReference type="EvolutionaryTrace" id="P0AEE8"/>
<dbReference type="PRO" id="PR:P0AEE8"/>
<dbReference type="Proteomes" id="UP000000625">
    <property type="component" value="Chromosome"/>
</dbReference>
<dbReference type="GO" id="GO:1904047">
    <property type="term" value="F:S-adenosyl-L-methionine binding"/>
    <property type="evidence" value="ECO:0000314"/>
    <property type="project" value="EcoCyc"/>
</dbReference>
<dbReference type="GO" id="GO:0043565">
    <property type="term" value="F:sequence-specific DNA binding"/>
    <property type="evidence" value="ECO:0000314"/>
    <property type="project" value="EcoCyc"/>
</dbReference>
<dbReference type="GO" id="GO:0009007">
    <property type="term" value="F:site-specific DNA-methyltransferase (adenine-specific) activity"/>
    <property type="evidence" value="ECO:0000314"/>
    <property type="project" value="EcoCyc"/>
</dbReference>
<dbReference type="GO" id="GO:1902328">
    <property type="term" value="P:bacterial-type DNA replication initiation"/>
    <property type="evidence" value="ECO:0000315"/>
    <property type="project" value="EcoCyc"/>
</dbReference>
<dbReference type="GO" id="GO:0009307">
    <property type="term" value="P:DNA restriction-modification system"/>
    <property type="evidence" value="ECO:0007669"/>
    <property type="project" value="InterPro"/>
</dbReference>
<dbReference type="GO" id="GO:0006261">
    <property type="term" value="P:DNA-templated DNA replication"/>
    <property type="evidence" value="ECO:0000315"/>
    <property type="project" value="EcoliWiki"/>
</dbReference>
<dbReference type="GO" id="GO:0032259">
    <property type="term" value="P:methylation"/>
    <property type="evidence" value="ECO:0007669"/>
    <property type="project" value="UniProtKB-KW"/>
</dbReference>
<dbReference type="GO" id="GO:0006298">
    <property type="term" value="P:mismatch repair"/>
    <property type="evidence" value="ECO:0000314"/>
    <property type="project" value="EcoliWiki"/>
</dbReference>
<dbReference type="GO" id="GO:0009411">
    <property type="term" value="P:response to UV"/>
    <property type="evidence" value="ECO:0000315"/>
    <property type="project" value="EcoCyc"/>
</dbReference>
<dbReference type="FunFam" id="1.10.1020.10:FF:000001">
    <property type="entry name" value="Site-specific DNA-methyltransferase (adenine-specific)"/>
    <property type="match status" value="1"/>
</dbReference>
<dbReference type="Gene3D" id="1.10.1020.10">
    <property type="entry name" value="Adenine-specific Methyltransferase, Domain 2"/>
    <property type="match status" value="1"/>
</dbReference>
<dbReference type="Gene3D" id="3.40.50.150">
    <property type="entry name" value="Vaccinia Virus protein VP39"/>
    <property type="match status" value="1"/>
</dbReference>
<dbReference type="InterPro" id="IPR023095">
    <property type="entry name" value="Ade_MeTrfase_dom_2"/>
</dbReference>
<dbReference type="InterPro" id="IPR002052">
    <property type="entry name" value="DNA_methylase_N6_adenine_CS"/>
</dbReference>
<dbReference type="InterPro" id="IPR012263">
    <property type="entry name" value="M_m6A_EcoRV"/>
</dbReference>
<dbReference type="InterPro" id="IPR012327">
    <property type="entry name" value="MeTrfase_D12"/>
</dbReference>
<dbReference type="InterPro" id="IPR029063">
    <property type="entry name" value="SAM-dependent_MTases_sf"/>
</dbReference>
<dbReference type="NCBIfam" id="TIGR00571">
    <property type="entry name" value="dam"/>
    <property type="match status" value="1"/>
</dbReference>
<dbReference type="NCBIfam" id="NF008152">
    <property type="entry name" value="PRK10904.1"/>
    <property type="match status" value="1"/>
</dbReference>
<dbReference type="PANTHER" id="PTHR30481">
    <property type="entry name" value="DNA ADENINE METHYLASE"/>
    <property type="match status" value="1"/>
</dbReference>
<dbReference type="PANTHER" id="PTHR30481:SF3">
    <property type="entry name" value="DNA ADENINE METHYLASE"/>
    <property type="match status" value="1"/>
</dbReference>
<dbReference type="Pfam" id="PF02086">
    <property type="entry name" value="MethyltransfD12"/>
    <property type="match status" value="1"/>
</dbReference>
<dbReference type="PIRSF" id="PIRSF000398">
    <property type="entry name" value="M_m6A_EcoRV"/>
    <property type="match status" value="1"/>
</dbReference>
<dbReference type="PRINTS" id="PR00505">
    <property type="entry name" value="D12N6MTFRASE"/>
</dbReference>
<dbReference type="SUPFAM" id="SSF53335">
    <property type="entry name" value="S-adenosyl-L-methionine-dependent methyltransferases"/>
    <property type="match status" value="1"/>
</dbReference>
<dbReference type="PROSITE" id="PS00092">
    <property type="entry name" value="N6_MTASE"/>
    <property type="match status" value="1"/>
</dbReference>
<proteinExistence type="evidence at protein level"/>
<comment type="function">
    <text evidence="2 4 7">An alpha subtype methylase that recognizes the double-stranded sequence 5'-GATC-3' and methylates A-2 on both strands (Probable) (PubMed:12654995). Although it shares sequence specificity with a number of type II restriction endonucleases and methylases, it is thought to act in methyl-directed mismatch repair, initiation of chromosome replication and gene expression. Genetic interactions among priB, dam, lexA, nagC, polA, rdgB, rdgB, rep and uup link the PriA-PriB replication restart pathway to DNA double-strand break repair (PubMed:36326440).</text>
</comment>
<comment type="catalytic activity">
    <reaction>
        <text>a 2'-deoxyadenosine in DNA + S-adenosyl-L-methionine = an N(6)-methyl-2'-deoxyadenosine in DNA + S-adenosyl-L-homocysteine + H(+)</text>
        <dbReference type="Rhea" id="RHEA:15197"/>
        <dbReference type="Rhea" id="RHEA-COMP:12418"/>
        <dbReference type="Rhea" id="RHEA-COMP:12419"/>
        <dbReference type="ChEBI" id="CHEBI:15378"/>
        <dbReference type="ChEBI" id="CHEBI:57856"/>
        <dbReference type="ChEBI" id="CHEBI:59789"/>
        <dbReference type="ChEBI" id="CHEBI:90615"/>
        <dbReference type="ChEBI" id="CHEBI:90616"/>
        <dbReference type="EC" id="2.1.1.72"/>
    </reaction>
</comment>
<comment type="interaction">
    <interactant intactId="EBI-548491">
        <id>P0AEE8</id>
    </interactant>
    <interactant intactId="EBI-548509">
        <id>P13035</id>
        <label>glpD</label>
    </interactant>
    <organismsDiffer>false</organismsDiffer>
    <experiments>3</experiments>
</comment>
<comment type="disruption phenotype">
    <text evidence="2">Cells are filamented, accumulate DNA double-strand breaks, have viability defects at 15 ng/ml ciprofoxacin. A double deletion with priB is seriously disadvantageous to cells.</text>
</comment>
<comment type="similarity">
    <text evidence="6">Belongs to the N(4)/N(6)-methyltransferase family.</text>
</comment>
<evidence type="ECO:0000250" key="1"/>
<evidence type="ECO:0000269" key="2">
    <source>
    </source>
</evidence>
<evidence type="ECO:0000269" key="3">
    <source>
    </source>
</evidence>
<evidence type="ECO:0000303" key="4">
    <source>
    </source>
</evidence>
<evidence type="ECO:0000303" key="5">
    <source>
    </source>
</evidence>
<evidence type="ECO:0000305" key="6"/>
<evidence type="ECO:0000305" key="7">
    <source>
    </source>
</evidence>
<evidence type="ECO:0007829" key="8">
    <source>
        <dbReference type="PDB" id="2G1P"/>
    </source>
</evidence>
<evidence type="ECO:0007829" key="9">
    <source>
        <dbReference type="PDB" id="4GOM"/>
    </source>
</evidence>
<sequence length="278" mass="32100">MKKNRAFLKWAGGKYPLLDDIKRHLPKGECLVEPFVGAGSVFLNTDFSRYILADINSDLISLYNIVKMRTDEYVQAARELFVPETNCAEVYYQFREEFNKSQDPFRRAVLFLYLNRYGYNGLCRYNLRGEFNVPFGRYKKPYFPEAELYHFAEKAQNAFFYCESYADSMARADDASVVYCDPPYAPLSATANFTAYHTNSFTLEQQAHLAEIAEGLVERHIPVLISNHDTMLTREWYQRAKLHVVKVRRSISSNGGTRKKVDELLALYKPGVVSPAKK</sequence>
<keyword id="KW-0002">3D-structure</keyword>
<keyword id="KW-0235">DNA replication</keyword>
<keyword id="KW-0238">DNA-binding</keyword>
<keyword id="KW-0489">Methyltransferase</keyword>
<keyword id="KW-1185">Reference proteome</keyword>
<keyword id="KW-0949">S-adenosyl-L-methionine</keyword>
<keyword id="KW-0808">Transferase</keyword>
<gene>
    <name evidence="5" type="primary">dam</name>
    <name type="ordered locus">b3387</name>
    <name type="ordered locus">JW3350</name>
</gene>
<reference key="1">
    <citation type="journal article" date="1983" name="Nucleic Acids Res.">
        <title>The isolation and characterization of the Escherichia coli DNA adenine methylase (dam) gene.</title>
        <authorList>
            <person name="Brooks J.E."/>
            <person name="Blumenthal R.M."/>
            <person name="Gingeras T.R."/>
        </authorList>
    </citation>
    <scope>NUCLEOTIDE SEQUENCE [GENOMIC DNA]</scope>
    <scope>FUNCTION</scope>
    <source>
        <strain>K12 / CS520</strain>
    </source>
</reference>
<reference key="2">
    <citation type="journal article" date="1995" name="Mol. Gen. Genet.">
        <title>Characterization of three genes in the dam-containing operon of Escherichia coli.</title>
        <authorList>
            <person name="Lyngstadaas A."/>
            <person name="Lobner-Olesen A."/>
            <person name="Boye E."/>
        </authorList>
    </citation>
    <scope>NUCLEOTIDE SEQUENCE [GENOMIC DNA]</scope>
</reference>
<reference key="3">
    <citation type="journal article" date="1997" name="Science">
        <title>The complete genome sequence of Escherichia coli K-12.</title>
        <authorList>
            <person name="Blattner F.R."/>
            <person name="Plunkett G. III"/>
            <person name="Bloch C.A."/>
            <person name="Perna N.T."/>
            <person name="Burland V."/>
            <person name="Riley M."/>
            <person name="Collado-Vides J."/>
            <person name="Glasner J.D."/>
            <person name="Rode C.K."/>
            <person name="Mayhew G.F."/>
            <person name="Gregor J."/>
            <person name="Davis N.W."/>
            <person name="Kirkpatrick H.A."/>
            <person name="Goeden M.A."/>
            <person name="Rose D.J."/>
            <person name="Mau B."/>
            <person name="Shao Y."/>
        </authorList>
    </citation>
    <scope>NUCLEOTIDE SEQUENCE [LARGE SCALE GENOMIC DNA]</scope>
    <source>
        <strain>K12 / MG1655 / ATCC 47076</strain>
    </source>
</reference>
<reference key="4">
    <citation type="journal article" date="2006" name="Mol. Syst. Biol.">
        <title>Highly accurate genome sequences of Escherichia coli K-12 strains MG1655 and W3110.</title>
        <authorList>
            <person name="Hayashi K."/>
            <person name="Morooka N."/>
            <person name="Yamamoto Y."/>
            <person name="Fujita K."/>
            <person name="Isono K."/>
            <person name="Choi S."/>
            <person name="Ohtsubo E."/>
            <person name="Baba T."/>
            <person name="Wanner B.L."/>
            <person name="Mori H."/>
            <person name="Horiuchi T."/>
        </authorList>
    </citation>
    <scope>NUCLEOTIDE SEQUENCE [LARGE SCALE GENOMIC DNA]</scope>
    <source>
        <strain>K12 / W3110 / ATCC 27325 / DSM 5911</strain>
    </source>
</reference>
<reference key="5">
    <citation type="journal article" date="1989" name="Mol. Gen. Genet.">
        <title>The Escherichia coli dam gene is expressed as a distal gene of a new operon.</title>
        <authorList>
            <person name="Jonczyk P."/>
            <person name="Hines R."/>
            <person name="Smith D.W."/>
        </authorList>
    </citation>
    <scope>NUCLEOTIDE SEQUENCE [GENOMIC DNA] OF 1-18</scope>
    <source>
        <strain>K12</strain>
    </source>
</reference>
<reference key="6">
    <citation type="journal article" date="1993" name="Nucleic Acids Res.">
        <title>The role of the preserved sequences of Dam methylase.</title>
        <authorList>
            <person name="Guyot J.-B."/>
            <person name="Grassi J."/>
            <person name="Hahn U."/>
            <person name="Guschlbauer W."/>
        </authorList>
    </citation>
    <scope>MUTAGENESIS</scope>
    <scope>MUTAGENESIS OF PRO-134; GLY-136; ARG-137; LYS-139; ASP-181; PRO-182 AND PRO-183</scope>
    <scope>DNA-BINDING</scope>
</reference>
<reference key="7">
    <citation type="journal article" date="2003" name="Nucleic Acids Res.">
        <title>A nomenclature for restriction enzymes, DNA methyltransferases, homing endonucleases and their genes.</title>
        <authorList>
            <person name="Roberts R.J."/>
            <person name="Belfort M."/>
            <person name="Bestor T."/>
            <person name="Bhagwat A.S."/>
            <person name="Bickle T.A."/>
            <person name="Bitinaite J."/>
            <person name="Blumenthal R.M."/>
            <person name="Degtyarev S.K."/>
            <person name="Dryden D.T."/>
            <person name="Dybvig K."/>
            <person name="Firman K."/>
            <person name="Gromova E.S."/>
            <person name="Gumport R.I."/>
            <person name="Halford S.E."/>
            <person name="Hattman S."/>
            <person name="Heitman J."/>
            <person name="Hornby D.P."/>
            <person name="Janulaitis A."/>
            <person name="Jeltsch A."/>
            <person name="Josephsen J."/>
            <person name="Kiss A."/>
            <person name="Klaenhammer T.R."/>
            <person name="Kobayashi I."/>
            <person name="Kong H."/>
            <person name="Krueger D.H."/>
            <person name="Lacks S."/>
            <person name="Marinus M.G."/>
            <person name="Miyahara M."/>
            <person name="Morgan R.D."/>
            <person name="Murray N.E."/>
            <person name="Nagaraja V."/>
            <person name="Piekarowicz A."/>
            <person name="Pingoud A."/>
            <person name="Raleigh E."/>
            <person name="Rao D.N."/>
            <person name="Reich N."/>
            <person name="Repin V.E."/>
            <person name="Selker E.U."/>
            <person name="Shaw P.C."/>
            <person name="Stein D.C."/>
            <person name="Stoddard B.L."/>
            <person name="Szybalski W."/>
            <person name="Trautner T.A."/>
            <person name="Van Etten J.L."/>
            <person name="Vitor J.M."/>
            <person name="Wilson G.G."/>
            <person name="Xu S.Y."/>
        </authorList>
    </citation>
    <scope>NOMENCLATURE</scope>
    <scope>SUBTYPE</scope>
</reference>
<reference key="8">
    <citation type="journal article" date="2022" name="G3 (Bethesda)">
        <title>Identification of genetic interactions with priB links the PriA/PriB DNA replication restart pathway to double-strand DNA break repair in Escherichia coli.</title>
        <authorList>
            <person name="McKenzie A.M."/>
            <person name="Henry C."/>
            <person name="Myers K.S."/>
            <person name="Place M.M."/>
            <person name="Keck J.L."/>
        </authorList>
    </citation>
    <scope>GENETIC INTERACTION</scope>
    <scope>DISRUPTION PHENOTYPE</scope>
    <source>
        <strain>K12 / MG1655 / ATCC 47076</strain>
    </source>
</reference>
<accession>P0AEE8</accession>
<accession>P00475</accession>
<accession>Q2M752</accession>
<feature type="chain" id="PRO_0000087991" description="DNA adenine methylase">
    <location>
        <begin position="1"/>
        <end position="278"/>
    </location>
</feature>
<feature type="binding site" evidence="1">
    <location>
        <position position="10"/>
    </location>
    <ligand>
        <name>S-adenosyl-L-methionine</name>
        <dbReference type="ChEBI" id="CHEBI:59789"/>
    </ligand>
</feature>
<feature type="binding site" evidence="1">
    <location>
        <position position="14"/>
    </location>
    <ligand>
        <name>S-adenosyl-L-methionine</name>
        <dbReference type="ChEBI" id="CHEBI:59789"/>
    </ligand>
</feature>
<feature type="binding site" evidence="1">
    <location>
        <position position="54"/>
    </location>
    <ligand>
        <name>S-adenosyl-L-methionine</name>
        <dbReference type="ChEBI" id="CHEBI:59789"/>
    </ligand>
</feature>
<feature type="binding site" evidence="1">
    <location>
        <position position="181"/>
    </location>
    <ligand>
        <name>S-adenosyl-L-methionine</name>
        <dbReference type="ChEBI" id="CHEBI:59789"/>
    </ligand>
</feature>
<feature type="mutagenesis site" description="About 63% methylase activity, binds S-adenosyl-methionine (SAM) normally." evidence="3">
    <original>P</original>
    <variation>S</variation>
    <location>
        <position position="134"/>
    </location>
</feature>
<feature type="mutagenesis site" description="About 33% methylase activity, binds SAM normally." evidence="3">
    <original>G</original>
    <variation>A</variation>
    <location>
        <position position="136"/>
    </location>
</feature>
<feature type="mutagenesis site" description="No methylase activity, binds SAM normally." evidence="3">
    <original>R</original>
    <variation>L</variation>
    <location>
        <position position="137"/>
    </location>
</feature>
<feature type="mutagenesis site" description="75% methylase activity, binds SAM normally." evidence="3">
    <original>K</original>
    <variation>S</variation>
    <variation>T</variation>
    <location>
        <position position="139"/>
    </location>
</feature>
<feature type="mutagenesis site" description="Protein stable, no methylase activity, no binding to S-adenosyl-methionine." evidence="3">
    <original>D</original>
    <variation>G</variation>
    <variation>N</variation>
    <variation>S</variation>
    <location>
        <position position="181"/>
    </location>
</feature>
<feature type="mutagenesis site" description="Low amounts of protein, no methyase activity, no binding to S-adenosyl-methionine." evidence="3">
    <original>P</original>
    <variation>E</variation>
    <variation>G</variation>
    <location>
        <position position="183"/>
    </location>
</feature>
<feature type="mutagenesis site" description="Protein stable, no methylase activity, no binding to S-adenosyl-methionine." evidence="3">
    <original>P</original>
    <variation>R</variation>
    <location>
        <position position="183"/>
    </location>
</feature>
<feature type="turn" evidence="9">
    <location>
        <begin position="11"/>
        <end position="13"/>
    </location>
</feature>
<feature type="helix" evidence="8">
    <location>
        <begin position="15"/>
        <end position="17"/>
    </location>
</feature>
<feature type="helix" evidence="8">
    <location>
        <begin position="18"/>
        <end position="24"/>
    </location>
</feature>
<feature type="strand" evidence="8">
    <location>
        <begin position="29"/>
        <end position="33"/>
    </location>
</feature>
<feature type="helix" evidence="8">
    <location>
        <begin position="40"/>
        <end position="43"/>
    </location>
</feature>
<feature type="strand" evidence="8">
    <location>
        <begin position="48"/>
        <end position="55"/>
    </location>
</feature>
<feature type="helix" evidence="8">
    <location>
        <begin position="57"/>
        <end position="68"/>
    </location>
</feature>
<feature type="helix" evidence="8">
    <location>
        <begin position="70"/>
        <end position="78"/>
    </location>
</feature>
<feature type="helix" evidence="9">
    <location>
        <begin position="79"/>
        <end position="81"/>
    </location>
</feature>
<feature type="helix" evidence="8">
    <location>
        <begin position="83"/>
        <end position="85"/>
    </location>
</feature>
<feature type="helix" evidence="8">
    <location>
        <begin position="88"/>
        <end position="100"/>
    </location>
</feature>
<feature type="helix" evidence="8">
    <location>
        <begin position="104"/>
        <end position="117"/>
    </location>
</feature>
<feature type="helix" evidence="8">
    <location>
        <begin position="119"/>
        <end position="121"/>
    </location>
</feature>
<feature type="helix" evidence="8">
    <location>
        <begin position="145"/>
        <end position="154"/>
    </location>
</feature>
<feature type="helix" evidence="8">
    <location>
        <begin position="155"/>
        <end position="157"/>
    </location>
</feature>
<feature type="strand" evidence="8">
    <location>
        <begin position="158"/>
        <end position="162"/>
    </location>
</feature>
<feature type="helix" evidence="8">
    <location>
        <begin position="165"/>
        <end position="169"/>
    </location>
</feature>
<feature type="strand" evidence="8">
    <location>
        <begin position="176"/>
        <end position="180"/>
    </location>
</feature>
<feature type="helix" evidence="8">
    <location>
        <begin position="203"/>
        <end position="218"/>
    </location>
</feature>
<feature type="strand" evidence="8">
    <location>
        <begin position="223"/>
        <end position="228"/>
    </location>
</feature>
<feature type="helix" evidence="8">
    <location>
        <begin position="231"/>
        <end position="236"/>
    </location>
</feature>
<feature type="turn" evidence="8">
    <location>
        <begin position="237"/>
        <end position="239"/>
    </location>
</feature>
<feature type="strand" evidence="8">
    <location>
        <begin position="240"/>
        <end position="245"/>
    </location>
</feature>
<feature type="strand" evidence="8">
    <location>
        <begin position="263"/>
        <end position="268"/>
    </location>
</feature>
<protein>
    <recommendedName>
        <fullName evidence="5">DNA adenine methylase</fullName>
        <ecNumber>2.1.1.72</ecNumber>
    </recommendedName>
    <alternativeName>
        <fullName>DNA adenine methyltransferase</fullName>
    </alternativeName>
    <alternativeName>
        <fullName>Deoxyadenosyl-methyltransferase</fullName>
    </alternativeName>
    <alternativeName>
        <fullName evidence="4">Orphan methyltransferase M.EcoKDam</fullName>
        <shortName evidence="4">M.EcoKDam</shortName>
    </alternativeName>
</protein>